<protein>
    <recommendedName>
        <fullName>Uncharacterized protein slr0104</fullName>
    </recommendedName>
</protein>
<proteinExistence type="predicted"/>
<reference key="1">
    <citation type="journal article" date="1995" name="DNA Res.">
        <title>Sequence analysis of the genome of the unicellular cyanobacterium Synechocystis sp. strain PCC6803. I. Sequence features in the 1 Mb region from map positions 64% to 92% of the genome.</title>
        <authorList>
            <person name="Kaneko T."/>
            <person name="Tanaka A."/>
            <person name="Sato S."/>
            <person name="Kotani H."/>
            <person name="Sazuka T."/>
            <person name="Miyajima N."/>
            <person name="Sugiura M."/>
            <person name="Tabata S."/>
        </authorList>
    </citation>
    <scope>NUCLEOTIDE SEQUENCE [LARGE SCALE GENOMIC DNA]</scope>
    <source>
        <strain>ATCC 27184 / PCC 6803 / N-1</strain>
    </source>
</reference>
<reference key="2">
    <citation type="journal article" date="1996" name="DNA Res.">
        <title>Sequence analysis of the genome of the unicellular cyanobacterium Synechocystis sp. strain PCC6803. II. Sequence determination of the entire genome and assignment of potential protein-coding regions.</title>
        <authorList>
            <person name="Kaneko T."/>
            <person name="Sato S."/>
            <person name="Kotani H."/>
            <person name="Tanaka A."/>
            <person name="Asamizu E."/>
            <person name="Nakamura Y."/>
            <person name="Miyajima N."/>
            <person name="Hirosawa M."/>
            <person name="Sugiura M."/>
            <person name="Sasamoto S."/>
            <person name="Kimura T."/>
            <person name="Hosouchi T."/>
            <person name="Matsuno A."/>
            <person name="Muraki A."/>
            <person name="Nakazaki N."/>
            <person name="Naruo K."/>
            <person name="Okumura S."/>
            <person name="Shimpo S."/>
            <person name="Takeuchi C."/>
            <person name="Wada T."/>
            <person name="Watanabe A."/>
            <person name="Yamada M."/>
            <person name="Yasuda M."/>
            <person name="Tabata S."/>
        </authorList>
    </citation>
    <scope>NUCLEOTIDE SEQUENCE [LARGE SCALE GENOMIC DNA]</scope>
    <source>
        <strain>ATCC 27184 / PCC 6803 / Kazusa</strain>
    </source>
</reference>
<evidence type="ECO:0000255" key="1"/>
<evidence type="ECO:0000255" key="2">
    <source>
        <dbReference type="PROSITE-ProRule" id="PRU01175"/>
    </source>
</evidence>
<evidence type="ECO:0000256" key="3">
    <source>
        <dbReference type="SAM" id="MobiDB-lite"/>
    </source>
</evidence>
<evidence type="ECO:0000305" key="4"/>
<accession>P54371</accession>
<gene>
    <name type="ordered locus">slr0104</name>
</gene>
<sequence>MKAIFALRQAVASQLKKSTASSHPLPRTTASTSQDETIWQKIHRSRFVRIAHPPVMLGITVVSLTGVVGYRFYNQPQLSVGTESPYTIYAPEDGSFVDERTTEEKRKEVRAGTIPRLQRDNELTAQLKQERSQYLDAINQLRYLAGTFPYIDTKIFTLEQQHLLRSLGPGEWQQLEDYISYGQPLPMASPQLAKLQQLFDQQKATTSPETMAGLLTSIRTAQDRYGRVTARLAEVKADRQITNNQIGALKLDGPTWQTTQQTIIQVHDRILTQGLPAGITAPLLGETVQLHLRNILPPQAHQVAENSLNNLLKDKYNLTVDKEATKNLAEKAVLAMENVKVSAEKNSVIVRAGEVITQEQFVLLDGYGLSQRQVNWQGLLRTAGLVGGALIIFCGVSRRIHRPLRRRDHILLCLLSVSTPVLFLLDPVYNNLPAISLLTSSFYGPTLAITQVVLVGGLSAFAMESIVWEYLLGSAAAALLAGMIASKLRSRDELALLGVGVGATQGIVYLFTYLIVNASAVTIIWYTALPSAIVYGLLGLAWSAMAIGVSPYLERLFDVVTPTRLVELSNPNCPLLQRLAKEAPGTFQHTLFVACLAESAARELRCNVELVRTGTLYHDIGKMHDPLGFIENQMGGPNKHDEINDPYVSVDIIKKHVSEGLVMARRYGLPQVVRDFIPEHQGQMLISYFYIQAKEAAERAGEPPVNEEEFRYTGPIPQSRETGIVMLADSCEAALRSLREANPETAMAMVNRIFKARWRDNQLQDSGLKYEELPIIADVFVRVWQQFHHQRIAYPKAALDVQVTSPSTTRF</sequence>
<keyword id="KW-1003">Cell membrane</keyword>
<keyword id="KW-0472">Membrane</keyword>
<keyword id="KW-1185">Reference proteome</keyword>
<keyword id="KW-0812">Transmembrane</keyword>
<keyword id="KW-1133">Transmembrane helix</keyword>
<organism>
    <name type="scientific">Synechocystis sp. (strain ATCC 27184 / PCC 6803 / Kazusa)</name>
    <dbReference type="NCBI Taxonomy" id="1111708"/>
    <lineage>
        <taxon>Bacteria</taxon>
        <taxon>Bacillati</taxon>
        <taxon>Cyanobacteriota</taxon>
        <taxon>Cyanophyceae</taxon>
        <taxon>Synechococcales</taxon>
        <taxon>Merismopediaceae</taxon>
        <taxon>Synechocystis</taxon>
    </lineage>
</organism>
<dbReference type="EMBL" id="BA000022">
    <property type="protein sequence ID" value="BAA10634.1"/>
    <property type="molecule type" value="Genomic_DNA"/>
</dbReference>
<dbReference type="PIR" id="S76690">
    <property type="entry name" value="S76690"/>
</dbReference>
<dbReference type="SMR" id="P54371"/>
<dbReference type="FunCoup" id="P54371">
    <property type="interactions" value="13"/>
</dbReference>
<dbReference type="IntAct" id="P54371">
    <property type="interactions" value="2"/>
</dbReference>
<dbReference type="STRING" id="1148.gene:10500138"/>
<dbReference type="PaxDb" id="1148-1208466"/>
<dbReference type="EnsemblBacteria" id="BAA10634">
    <property type="protein sequence ID" value="BAA10634"/>
    <property type="gene ID" value="BAA10634"/>
</dbReference>
<dbReference type="KEGG" id="syn:slr0104"/>
<dbReference type="eggNOG" id="COG1480">
    <property type="taxonomic scope" value="Bacteria"/>
</dbReference>
<dbReference type="InParanoid" id="P54371"/>
<dbReference type="PhylomeDB" id="P54371"/>
<dbReference type="Proteomes" id="UP000001425">
    <property type="component" value="Chromosome"/>
</dbReference>
<dbReference type="GO" id="GO:0005886">
    <property type="term" value="C:plasma membrane"/>
    <property type="evidence" value="ECO:0007669"/>
    <property type="project" value="UniProtKB-SubCell"/>
</dbReference>
<dbReference type="CDD" id="cd00077">
    <property type="entry name" value="HDc"/>
    <property type="match status" value="1"/>
</dbReference>
<dbReference type="Gene3D" id="1.10.3210.10">
    <property type="entry name" value="Hypothetical protein af1432"/>
    <property type="match status" value="1"/>
</dbReference>
<dbReference type="InterPro" id="IPR003607">
    <property type="entry name" value="HD/PDEase_dom"/>
</dbReference>
<dbReference type="InterPro" id="IPR006674">
    <property type="entry name" value="HD_domain"/>
</dbReference>
<dbReference type="InterPro" id="IPR006675">
    <property type="entry name" value="HDIG_dom"/>
</dbReference>
<dbReference type="InterPro" id="IPR011624">
    <property type="entry name" value="Metal-dep_PHydrolase_7TM_extra"/>
</dbReference>
<dbReference type="InterPro" id="IPR011621">
    <property type="entry name" value="Metal-dep_PHydrolase_7TM_intra"/>
</dbReference>
<dbReference type="InterPro" id="IPR052722">
    <property type="entry name" value="PgpH_phosphodiesterase"/>
</dbReference>
<dbReference type="NCBIfam" id="TIGR00277">
    <property type="entry name" value="HDIG"/>
    <property type="match status" value="1"/>
</dbReference>
<dbReference type="PANTHER" id="PTHR36442">
    <property type="entry name" value="CYCLIC-DI-AMP PHOSPHODIESTERASE PGPH"/>
    <property type="match status" value="1"/>
</dbReference>
<dbReference type="PANTHER" id="PTHR36442:SF1">
    <property type="entry name" value="CYCLIC-DI-AMP PHOSPHODIESTERASE PGPH"/>
    <property type="match status" value="1"/>
</dbReference>
<dbReference type="Pfam" id="PF07698">
    <property type="entry name" value="7TM-7TMR_HD"/>
    <property type="match status" value="1"/>
</dbReference>
<dbReference type="Pfam" id="PF07697">
    <property type="entry name" value="7TMR-HDED"/>
    <property type="match status" value="1"/>
</dbReference>
<dbReference type="Pfam" id="PF01966">
    <property type="entry name" value="HD"/>
    <property type="match status" value="1"/>
</dbReference>
<dbReference type="SMART" id="SM00471">
    <property type="entry name" value="HDc"/>
    <property type="match status" value="1"/>
</dbReference>
<dbReference type="SUPFAM" id="SSF109604">
    <property type="entry name" value="HD-domain/PDEase-like"/>
    <property type="match status" value="1"/>
</dbReference>
<dbReference type="PROSITE" id="PS51831">
    <property type="entry name" value="HD"/>
    <property type="match status" value="1"/>
</dbReference>
<name>Y104_SYNY3</name>
<comment type="subcellular location">
    <subcellularLocation>
        <location evidence="4">Cell membrane</location>
        <topology evidence="4">Multi-pass membrane protein</topology>
    </subcellularLocation>
</comment>
<feature type="chain" id="PRO_0000157861" description="Uncharacterized protein slr0104">
    <location>
        <begin position="1"/>
        <end position="811"/>
    </location>
</feature>
<feature type="transmembrane region" description="Helical" evidence="1">
    <location>
        <begin position="50"/>
        <end position="70"/>
    </location>
</feature>
<feature type="transmembrane region" description="Helical" evidence="1">
    <location>
        <begin position="376"/>
        <end position="396"/>
    </location>
</feature>
<feature type="transmembrane region" description="Helical" evidence="1">
    <location>
        <begin position="409"/>
        <end position="429"/>
    </location>
</feature>
<feature type="transmembrane region" description="Helical" evidence="1">
    <location>
        <begin position="442"/>
        <end position="462"/>
    </location>
</feature>
<feature type="transmembrane region" description="Helical" evidence="1">
    <location>
        <begin position="466"/>
        <end position="486"/>
    </location>
</feature>
<feature type="transmembrane region" description="Helical" evidence="1">
    <location>
        <begin position="496"/>
        <end position="516"/>
    </location>
</feature>
<feature type="transmembrane region" description="Helical" evidence="1">
    <location>
        <begin position="529"/>
        <end position="549"/>
    </location>
</feature>
<feature type="domain" description="HD" evidence="2">
    <location>
        <begin position="586"/>
        <end position="734"/>
    </location>
</feature>
<feature type="region of interest" description="Disordered" evidence="3">
    <location>
        <begin position="16"/>
        <end position="35"/>
    </location>
</feature>